<accession>Q983A9</accession>
<protein>
    <recommendedName>
        <fullName evidence="1">Transcription antitermination protein NusB</fullName>
    </recommendedName>
    <alternativeName>
        <fullName evidence="1">Antitermination factor NusB</fullName>
    </alternativeName>
</protein>
<name>NUSB_RHILO</name>
<evidence type="ECO:0000255" key="1">
    <source>
        <dbReference type="HAMAP-Rule" id="MF_00073"/>
    </source>
</evidence>
<organism>
    <name type="scientific">Mesorhizobium japonicum (strain LMG 29417 / CECT 9101 / MAFF 303099)</name>
    <name type="common">Mesorhizobium loti (strain MAFF 303099)</name>
    <dbReference type="NCBI Taxonomy" id="266835"/>
    <lineage>
        <taxon>Bacteria</taxon>
        <taxon>Pseudomonadati</taxon>
        <taxon>Pseudomonadota</taxon>
        <taxon>Alphaproteobacteria</taxon>
        <taxon>Hyphomicrobiales</taxon>
        <taxon>Phyllobacteriaceae</taxon>
        <taxon>Mesorhizobium</taxon>
    </lineage>
</organism>
<comment type="function">
    <text evidence="1">Involved in transcription antitermination. Required for transcription of ribosomal RNA (rRNA) genes. Binds specifically to the boxA antiterminator sequence of the ribosomal RNA (rrn) operons.</text>
</comment>
<comment type="similarity">
    <text evidence="1">Belongs to the NusB family.</text>
</comment>
<reference key="1">
    <citation type="journal article" date="2000" name="DNA Res.">
        <title>Complete genome structure of the nitrogen-fixing symbiotic bacterium Mesorhizobium loti.</title>
        <authorList>
            <person name="Kaneko T."/>
            <person name="Nakamura Y."/>
            <person name="Sato S."/>
            <person name="Asamizu E."/>
            <person name="Kato T."/>
            <person name="Sasamoto S."/>
            <person name="Watanabe A."/>
            <person name="Idesawa K."/>
            <person name="Ishikawa A."/>
            <person name="Kawashima K."/>
            <person name="Kimura T."/>
            <person name="Kishida Y."/>
            <person name="Kiyokawa C."/>
            <person name="Kohara M."/>
            <person name="Matsumoto M."/>
            <person name="Matsuno A."/>
            <person name="Mochizuki Y."/>
            <person name="Nakayama S."/>
            <person name="Nakazaki N."/>
            <person name="Shimpo S."/>
            <person name="Sugimoto M."/>
            <person name="Takeuchi C."/>
            <person name="Yamada M."/>
            <person name="Tabata S."/>
        </authorList>
    </citation>
    <scope>NUCLEOTIDE SEQUENCE [LARGE SCALE GENOMIC DNA]</scope>
    <source>
        <strain>LMG 29417 / CECT 9101 / MAFF 303099</strain>
    </source>
</reference>
<sequence>MRHANKRGAARLAAVQALYQMDVAGSGVFEITAEYEAFRLGKEVDGALYREADAQWFRAILTGVVEDQKTIDPVIRQALTDDWPLSRLDSTLRAILRAGVYELMKREDVPVAVIVSEYVDIAKAFYEEDEPKLVNAVLDRVSRRVRGEGRGKDAS</sequence>
<dbReference type="EMBL" id="BA000012">
    <property type="protein sequence ID" value="BAB54297.1"/>
    <property type="molecule type" value="Genomic_DNA"/>
</dbReference>
<dbReference type="SMR" id="Q983A9"/>
<dbReference type="KEGG" id="mlo:mlr8411"/>
<dbReference type="eggNOG" id="COG0781">
    <property type="taxonomic scope" value="Bacteria"/>
</dbReference>
<dbReference type="HOGENOM" id="CLU_087843_4_0_5"/>
<dbReference type="Proteomes" id="UP000000552">
    <property type="component" value="Chromosome"/>
</dbReference>
<dbReference type="GO" id="GO:0005829">
    <property type="term" value="C:cytosol"/>
    <property type="evidence" value="ECO:0007669"/>
    <property type="project" value="TreeGrafter"/>
</dbReference>
<dbReference type="GO" id="GO:0003723">
    <property type="term" value="F:RNA binding"/>
    <property type="evidence" value="ECO:0007669"/>
    <property type="project" value="UniProtKB-UniRule"/>
</dbReference>
<dbReference type="GO" id="GO:0006353">
    <property type="term" value="P:DNA-templated transcription termination"/>
    <property type="evidence" value="ECO:0007669"/>
    <property type="project" value="UniProtKB-UniRule"/>
</dbReference>
<dbReference type="GO" id="GO:0031564">
    <property type="term" value="P:transcription antitermination"/>
    <property type="evidence" value="ECO:0007669"/>
    <property type="project" value="UniProtKB-KW"/>
</dbReference>
<dbReference type="Gene3D" id="1.10.940.10">
    <property type="entry name" value="NusB-like"/>
    <property type="match status" value="1"/>
</dbReference>
<dbReference type="HAMAP" id="MF_00073">
    <property type="entry name" value="NusB"/>
    <property type="match status" value="1"/>
</dbReference>
<dbReference type="InterPro" id="IPR035926">
    <property type="entry name" value="NusB-like_sf"/>
</dbReference>
<dbReference type="InterPro" id="IPR011605">
    <property type="entry name" value="NusB_fam"/>
</dbReference>
<dbReference type="InterPro" id="IPR006027">
    <property type="entry name" value="NusB_RsmB_TIM44"/>
</dbReference>
<dbReference type="NCBIfam" id="TIGR01951">
    <property type="entry name" value="nusB"/>
    <property type="match status" value="1"/>
</dbReference>
<dbReference type="PANTHER" id="PTHR11078:SF3">
    <property type="entry name" value="ANTITERMINATION NUSB DOMAIN-CONTAINING PROTEIN"/>
    <property type="match status" value="1"/>
</dbReference>
<dbReference type="PANTHER" id="PTHR11078">
    <property type="entry name" value="N UTILIZATION SUBSTANCE PROTEIN B-RELATED"/>
    <property type="match status" value="1"/>
</dbReference>
<dbReference type="Pfam" id="PF01029">
    <property type="entry name" value="NusB"/>
    <property type="match status" value="1"/>
</dbReference>
<dbReference type="SUPFAM" id="SSF48013">
    <property type="entry name" value="NusB-like"/>
    <property type="match status" value="1"/>
</dbReference>
<gene>
    <name evidence="1" type="primary">nusB</name>
    <name type="ordered locus">mlr8411</name>
</gene>
<proteinExistence type="inferred from homology"/>
<keyword id="KW-0694">RNA-binding</keyword>
<keyword id="KW-0804">Transcription</keyword>
<keyword id="KW-0889">Transcription antitermination</keyword>
<keyword id="KW-0805">Transcription regulation</keyword>
<feature type="chain" id="PRO_0000176568" description="Transcription antitermination protein NusB">
    <location>
        <begin position="1"/>
        <end position="155"/>
    </location>
</feature>